<proteinExistence type="inferred from homology"/>
<accession>B2FMY6</accession>
<organism>
    <name type="scientific">Stenotrophomonas maltophilia (strain K279a)</name>
    <dbReference type="NCBI Taxonomy" id="522373"/>
    <lineage>
        <taxon>Bacteria</taxon>
        <taxon>Pseudomonadati</taxon>
        <taxon>Pseudomonadota</taxon>
        <taxon>Gammaproteobacteria</taxon>
        <taxon>Lysobacterales</taxon>
        <taxon>Lysobacteraceae</taxon>
        <taxon>Stenotrophomonas</taxon>
        <taxon>Stenotrophomonas maltophilia group</taxon>
    </lineage>
</organism>
<dbReference type="EMBL" id="AM743169">
    <property type="protein sequence ID" value="CAQ45507.1"/>
    <property type="molecule type" value="Genomic_DNA"/>
</dbReference>
<dbReference type="RefSeq" id="WP_005409242.1">
    <property type="nucleotide sequence ID" value="NC_010943.1"/>
</dbReference>
<dbReference type="SMR" id="B2FMY6"/>
<dbReference type="EnsemblBacteria" id="CAQ45507">
    <property type="protein sequence ID" value="CAQ45507"/>
    <property type="gene ID" value="Smlt1993"/>
</dbReference>
<dbReference type="KEGG" id="sml:Smlt1993"/>
<dbReference type="eggNOG" id="COG0484">
    <property type="taxonomic scope" value="Bacteria"/>
</dbReference>
<dbReference type="HOGENOM" id="CLU_017633_0_7_6"/>
<dbReference type="Proteomes" id="UP000008840">
    <property type="component" value="Chromosome"/>
</dbReference>
<dbReference type="GO" id="GO:0005737">
    <property type="term" value="C:cytoplasm"/>
    <property type="evidence" value="ECO:0007669"/>
    <property type="project" value="UniProtKB-SubCell"/>
</dbReference>
<dbReference type="GO" id="GO:0005524">
    <property type="term" value="F:ATP binding"/>
    <property type="evidence" value="ECO:0007669"/>
    <property type="project" value="InterPro"/>
</dbReference>
<dbReference type="GO" id="GO:0031072">
    <property type="term" value="F:heat shock protein binding"/>
    <property type="evidence" value="ECO:0007669"/>
    <property type="project" value="InterPro"/>
</dbReference>
<dbReference type="GO" id="GO:0051082">
    <property type="term" value="F:unfolded protein binding"/>
    <property type="evidence" value="ECO:0007669"/>
    <property type="project" value="UniProtKB-UniRule"/>
</dbReference>
<dbReference type="GO" id="GO:0008270">
    <property type="term" value="F:zinc ion binding"/>
    <property type="evidence" value="ECO:0007669"/>
    <property type="project" value="UniProtKB-UniRule"/>
</dbReference>
<dbReference type="GO" id="GO:0051085">
    <property type="term" value="P:chaperone cofactor-dependent protein refolding"/>
    <property type="evidence" value="ECO:0007669"/>
    <property type="project" value="TreeGrafter"/>
</dbReference>
<dbReference type="GO" id="GO:0006260">
    <property type="term" value="P:DNA replication"/>
    <property type="evidence" value="ECO:0007669"/>
    <property type="project" value="UniProtKB-KW"/>
</dbReference>
<dbReference type="GO" id="GO:0042026">
    <property type="term" value="P:protein refolding"/>
    <property type="evidence" value="ECO:0007669"/>
    <property type="project" value="TreeGrafter"/>
</dbReference>
<dbReference type="GO" id="GO:0009408">
    <property type="term" value="P:response to heat"/>
    <property type="evidence" value="ECO:0007669"/>
    <property type="project" value="InterPro"/>
</dbReference>
<dbReference type="CDD" id="cd06257">
    <property type="entry name" value="DnaJ"/>
    <property type="match status" value="1"/>
</dbReference>
<dbReference type="CDD" id="cd10747">
    <property type="entry name" value="DnaJ_C"/>
    <property type="match status" value="1"/>
</dbReference>
<dbReference type="CDD" id="cd10719">
    <property type="entry name" value="DnaJ_zf"/>
    <property type="match status" value="1"/>
</dbReference>
<dbReference type="FunFam" id="1.10.287.110:FF:000034">
    <property type="entry name" value="Chaperone protein DnaJ"/>
    <property type="match status" value="1"/>
</dbReference>
<dbReference type="FunFam" id="2.10.230.10:FF:000002">
    <property type="entry name" value="Molecular chaperone DnaJ"/>
    <property type="match status" value="1"/>
</dbReference>
<dbReference type="FunFam" id="2.60.260.20:FF:000004">
    <property type="entry name" value="Molecular chaperone DnaJ"/>
    <property type="match status" value="1"/>
</dbReference>
<dbReference type="Gene3D" id="1.10.287.110">
    <property type="entry name" value="DnaJ domain"/>
    <property type="match status" value="1"/>
</dbReference>
<dbReference type="Gene3D" id="2.10.230.10">
    <property type="entry name" value="Heat shock protein DnaJ, cysteine-rich domain"/>
    <property type="match status" value="1"/>
</dbReference>
<dbReference type="Gene3D" id="2.60.260.20">
    <property type="entry name" value="Urease metallochaperone UreE, N-terminal domain"/>
    <property type="match status" value="2"/>
</dbReference>
<dbReference type="HAMAP" id="MF_01152">
    <property type="entry name" value="DnaJ"/>
    <property type="match status" value="1"/>
</dbReference>
<dbReference type="InterPro" id="IPR012724">
    <property type="entry name" value="DnaJ"/>
</dbReference>
<dbReference type="InterPro" id="IPR002939">
    <property type="entry name" value="DnaJ_C"/>
</dbReference>
<dbReference type="InterPro" id="IPR001623">
    <property type="entry name" value="DnaJ_domain"/>
</dbReference>
<dbReference type="InterPro" id="IPR008971">
    <property type="entry name" value="HSP40/DnaJ_pept-bd"/>
</dbReference>
<dbReference type="InterPro" id="IPR001305">
    <property type="entry name" value="HSP_DnaJ_Cys-rich_dom"/>
</dbReference>
<dbReference type="InterPro" id="IPR036410">
    <property type="entry name" value="HSP_DnaJ_Cys-rich_dom_sf"/>
</dbReference>
<dbReference type="InterPro" id="IPR036869">
    <property type="entry name" value="J_dom_sf"/>
</dbReference>
<dbReference type="NCBIfam" id="TIGR02349">
    <property type="entry name" value="DnaJ_bact"/>
    <property type="match status" value="1"/>
</dbReference>
<dbReference type="NCBIfam" id="NF008035">
    <property type="entry name" value="PRK10767.1"/>
    <property type="match status" value="1"/>
</dbReference>
<dbReference type="PANTHER" id="PTHR43096:SF48">
    <property type="entry name" value="CHAPERONE PROTEIN DNAJ"/>
    <property type="match status" value="1"/>
</dbReference>
<dbReference type="PANTHER" id="PTHR43096">
    <property type="entry name" value="DNAJ HOMOLOG 1, MITOCHONDRIAL-RELATED"/>
    <property type="match status" value="1"/>
</dbReference>
<dbReference type="Pfam" id="PF00226">
    <property type="entry name" value="DnaJ"/>
    <property type="match status" value="1"/>
</dbReference>
<dbReference type="Pfam" id="PF01556">
    <property type="entry name" value="DnaJ_C"/>
    <property type="match status" value="1"/>
</dbReference>
<dbReference type="Pfam" id="PF00684">
    <property type="entry name" value="DnaJ_CXXCXGXG"/>
    <property type="match status" value="1"/>
</dbReference>
<dbReference type="PRINTS" id="PR00625">
    <property type="entry name" value="JDOMAIN"/>
</dbReference>
<dbReference type="SMART" id="SM00271">
    <property type="entry name" value="DnaJ"/>
    <property type="match status" value="1"/>
</dbReference>
<dbReference type="SUPFAM" id="SSF46565">
    <property type="entry name" value="Chaperone J-domain"/>
    <property type="match status" value="1"/>
</dbReference>
<dbReference type="SUPFAM" id="SSF57938">
    <property type="entry name" value="DnaJ/Hsp40 cysteine-rich domain"/>
    <property type="match status" value="1"/>
</dbReference>
<dbReference type="SUPFAM" id="SSF49493">
    <property type="entry name" value="HSP40/DnaJ peptide-binding domain"/>
    <property type="match status" value="2"/>
</dbReference>
<dbReference type="PROSITE" id="PS50076">
    <property type="entry name" value="DNAJ_2"/>
    <property type="match status" value="1"/>
</dbReference>
<dbReference type="PROSITE" id="PS51188">
    <property type="entry name" value="ZF_CR"/>
    <property type="match status" value="1"/>
</dbReference>
<feature type="chain" id="PRO_1000137731" description="Chaperone protein DnaJ">
    <location>
        <begin position="1"/>
        <end position="374"/>
    </location>
</feature>
<feature type="domain" description="J" evidence="1">
    <location>
        <begin position="5"/>
        <end position="70"/>
    </location>
</feature>
<feature type="repeat" description="CXXCXGXG motif">
    <location>
        <begin position="143"/>
        <end position="150"/>
    </location>
</feature>
<feature type="repeat" description="CXXCXGXG motif">
    <location>
        <begin position="159"/>
        <end position="166"/>
    </location>
</feature>
<feature type="repeat" description="CXXCXGXG motif">
    <location>
        <begin position="181"/>
        <end position="188"/>
    </location>
</feature>
<feature type="repeat" description="CXXCXGXG motif">
    <location>
        <begin position="195"/>
        <end position="202"/>
    </location>
</feature>
<feature type="zinc finger region" description="CR-type" evidence="1">
    <location>
        <begin position="130"/>
        <end position="207"/>
    </location>
</feature>
<feature type="binding site" evidence="1">
    <location>
        <position position="143"/>
    </location>
    <ligand>
        <name>Zn(2+)</name>
        <dbReference type="ChEBI" id="CHEBI:29105"/>
        <label>1</label>
    </ligand>
</feature>
<feature type="binding site" evidence="1">
    <location>
        <position position="146"/>
    </location>
    <ligand>
        <name>Zn(2+)</name>
        <dbReference type="ChEBI" id="CHEBI:29105"/>
        <label>1</label>
    </ligand>
</feature>
<feature type="binding site" evidence="1">
    <location>
        <position position="159"/>
    </location>
    <ligand>
        <name>Zn(2+)</name>
        <dbReference type="ChEBI" id="CHEBI:29105"/>
        <label>2</label>
    </ligand>
</feature>
<feature type="binding site" evidence="1">
    <location>
        <position position="162"/>
    </location>
    <ligand>
        <name>Zn(2+)</name>
        <dbReference type="ChEBI" id="CHEBI:29105"/>
        <label>2</label>
    </ligand>
</feature>
<feature type="binding site" evidence="1">
    <location>
        <position position="181"/>
    </location>
    <ligand>
        <name>Zn(2+)</name>
        <dbReference type="ChEBI" id="CHEBI:29105"/>
        <label>2</label>
    </ligand>
</feature>
<feature type="binding site" evidence="1">
    <location>
        <position position="184"/>
    </location>
    <ligand>
        <name>Zn(2+)</name>
        <dbReference type="ChEBI" id="CHEBI:29105"/>
        <label>2</label>
    </ligand>
</feature>
<feature type="binding site" evidence="1">
    <location>
        <position position="195"/>
    </location>
    <ligand>
        <name>Zn(2+)</name>
        <dbReference type="ChEBI" id="CHEBI:29105"/>
        <label>1</label>
    </ligand>
</feature>
<feature type="binding site" evidence="1">
    <location>
        <position position="198"/>
    </location>
    <ligand>
        <name>Zn(2+)</name>
        <dbReference type="ChEBI" id="CHEBI:29105"/>
        <label>1</label>
    </ligand>
</feature>
<protein>
    <recommendedName>
        <fullName evidence="1">Chaperone protein DnaJ</fullName>
    </recommendedName>
</protein>
<keyword id="KW-0143">Chaperone</keyword>
<keyword id="KW-0963">Cytoplasm</keyword>
<keyword id="KW-0235">DNA replication</keyword>
<keyword id="KW-0479">Metal-binding</keyword>
<keyword id="KW-1185">Reference proteome</keyword>
<keyword id="KW-0677">Repeat</keyword>
<keyword id="KW-0346">Stress response</keyword>
<keyword id="KW-0862">Zinc</keyword>
<keyword id="KW-0863">Zinc-finger</keyword>
<comment type="function">
    <text evidence="1">Participates actively in the response to hyperosmotic and heat shock by preventing the aggregation of stress-denatured proteins and by disaggregating proteins, also in an autonomous, DnaK-independent fashion. Unfolded proteins bind initially to DnaJ; upon interaction with the DnaJ-bound protein, DnaK hydrolyzes its bound ATP, resulting in the formation of a stable complex. GrpE releases ADP from DnaK; ATP binding to DnaK triggers the release of the substrate protein, thus completing the reaction cycle. Several rounds of ATP-dependent interactions between DnaJ, DnaK and GrpE are required for fully efficient folding. Also involved, together with DnaK and GrpE, in the DNA replication of plasmids through activation of initiation proteins.</text>
</comment>
<comment type="cofactor">
    <cofactor evidence="1">
        <name>Zn(2+)</name>
        <dbReference type="ChEBI" id="CHEBI:29105"/>
    </cofactor>
    <text evidence="1">Binds 2 Zn(2+) ions per monomer.</text>
</comment>
<comment type="subunit">
    <text evidence="1">Homodimer.</text>
</comment>
<comment type="subcellular location">
    <subcellularLocation>
        <location evidence="1">Cytoplasm</location>
    </subcellularLocation>
</comment>
<comment type="domain">
    <text evidence="1">The J domain is necessary and sufficient to stimulate DnaK ATPase activity. Zinc center 1 plays an important role in the autonomous, DnaK-independent chaperone activity of DnaJ. Zinc center 2 is essential for interaction with DnaK and for DnaJ activity.</text>
</comment>
<comment type="similarity">
    <text evidence="1">Belongs to the DnaJ family.</text>
</comment>
<reference key="1">
    <citation type="journal article" date="2008" name="Genome Biol.">
        <title>The complete genome, comparative and functional analysis of Stenotrophomonas maltophilia reveals an organism heavily shielded by drug resistance determinants.</title>
        <authorList>
            <person name="Crossman L.C."/>
            <person name="Gould V.C."/>
            <person name="Dow J.M."/>
            <person name="Vernikos G.S."/>
            <person name="Okazaki A."/>
            <person name="Sebaihia M."/>
            <person name="Saunders D."/>
            <person name="Arrowsmith C."/>
            <person name="Carver T."/>
            <person name="Peters N."/>
            <person name="Adlem E."/>
            <person name="Kerhornou A."/>
            <person name="Lord A."/>
            <person name="Murphy L."/>
            <person name="Seeger K."/>
            <person name="Squares R."/>
            <person name="Rutter S."/>
            <person name="Quail M.A."/>
            <person name="Rajandream M.A."/>
            <person name="Harris D."/>
            <person name="Churcher C."/>
            <person name="Bentley S.D."/>
            <person name="Parkhill J."/>
            <person name="Thomson N.R."/>
            <person name="Avison M.B."/>
        </authorList>
    </citation>
    <scope>NUCLEOTIDE SEQUENCE [LARGE SCALE GENOMIC DNA]</scope>
    <source>
        <strain>K279a</strain>
    </source>
</reference>
<evidence type="ECO:0000255" key="1">
    <source>
        <dbReference type="HAMAP-Rule" id="MF_01152"/>
    </source>
</evidence>
<sequence length="374" mass="40674">MSKRDYYEVLGVARTATDDELKKAYRRCAMKFHPDRNPGDAAAEASFKECKEAYEVLSDGNKRRMYDSHGHAAFEHGMGGGGPGGPDMNDIFGDIFGNIFGGGGGGPRQARRGADIGYVMELDLEEAVRGVERRIEIPTLAECGDCDGSGSEDGKVETCNVCHGRGQVRIQRGIFAMQQACHNCGGRGQIIAKPCKTCHGNGRVEEDKVLSVKVPAGVDTGDRIRLQGEGEAGPAGTPPGDLYVEVRVREHAIFQRDGDDLHCEVPIRISQAALGDTVRVATLGGEAEIRIPAETQTGKLFRLRGKGVRSVRSRSEGDLYCRVVVETPVNLTPEQRKLLEQFEATFVGEEARKHSPKSATFMDGVKGFWDRMTS</sequence>
<gene>
    <name evidence="1" type="primary">dnaJ</name>
    <name type="ordered locus">Smlt1993</name>
</gene>
<name>DNAJ_STRMK</name>